<evidence type="ECO:0000250" key="1"/>
<evidence type="ECO:0000255" key="2"/>
<evidence type="ECO:0000256" key="3">
    <source>
        <dbReference type="SAM" id="MobiDB-lite"/>
    </source>
</evidence>
<evidence type="ECO:0000269" key="4">
    <source>
    </source>
</evidence>
<evidence type="ECO:0000269" key="5">
    <source>
    </source>
</evidence>
<evidence type="ECO:0000305" key="6"/>
<evidence type="ECO:0007829" key="7">
    <source>
        <dbReference type="PDB" id="5MG8"/>
    </source>
</evidence>
<protein>
    <recommendedName>
        <fullName>Structural maintenance of chromosomes protein 6</fullName>
    </recommendedName>
    <alternativeName>
        <fullName>DNA repair protein rad18</fullName>
    </alternativeName>
</protein>
<proteinExistence type="evidence at protein level"/>
<name>SMC6_SCHPO</name>
<organism>
    <name type="scientific">Schizosaccharomyces pombe (strain 972 / ATCC 24843)</name>
    <name type="common">Fission yeast</name>
    <dbReference type="NCBI Taxonomy" id="284812"/>
    <lineage>
        <taxon>Eukaryota</taxon>
        <taxon>Fungi</taxon>
        <taxon>Dikarya</taxon>
        <taxon>Ascomycota</taxon>
        <taxon>Taphrinomycotina</taxon>
        <taxon>Schizosaccharomycetes</taxon>
        <taxon>Schizosaccharomycetales</taxon>
        <taxon>Schizosaccharomycetaceae</taxon>
        <taxon>Schizosaccharomyces</taxon>
    </lineage>
</organism>
<feature type="chain" id="PRO_0000119021" description="Structural maintenance of chromosomes protein 6">
    <location>
        <begin position="1"/>
        <end position="1140"/>
    </location>
</feature>
<feature type="region of interest" description="Disordered" evidence="3">
    <location>
        <begin position="1"/>
        <end position="63"/>
    </location>
</feature>
<feature type="region of interest" description="Flexible hinge">
    <location>
        <begin position="494"/>
        <end position="710"/>
    </location>
</feature>
<feature type="coiled-coil region" evidence="2">
    <location>
        <begin position="262"/>
        <end position="290"/>
    </location>
</feature>
<feature type="coiled-coil region" evidence="2">
    <location>
        <begin position="329"/>
        <end position="369"/>
    </location>
</feature>
<feature type="coiled-coil region" evidence="2">
    <location>
        <begin position="448"/>
        <end position="493"/>
    </location>
</feature>
<feature type="coiled-coil region" evidence="2">
    <location>
        <begin position="711"/>
        <end position="978"/>
    </location>
</feature>
<feature type="coiled-coil region" evidence="2">
    <location>
        <begin position="1113"/>
        <end position="1140"/>
    </location>
</feature>
<feature type="short sequence motif" description="Nuclear localization signal" evidence="2">
    <location>
        <begin position="22"/>
        <end position="25"/>
    </location>
</feature>
<feature type="short sequence motif" description="Nuclear localization signal" evidence="2">
    <location>
        <begin position="41"/>
        <end position="44"/>
    </location>
</feature>
<feature type="compositionally biased region" description="Basic and acidic residues" evidence="3">
    <location>
        <begin position="14"/>
        <end position="28"/>
    </location>
</feature>
<feature type="compositionally biased region" description="Basic and acidic residues" evidence="3">
    <location>
        <begin position="47"/>
        <end position="57"/>
    </location>
</feature>
<feature type="binding site" evidence="2">
    <location>
        <begin position="124"/>
        <end position="131"/>
    </location>
    <ligand>
        <name>ATP</name>
        <dbReference type="ChEBI" id="CHEBI:30616"/>
    </ligand>
</feature>
<feature type="mutagenesis site" description="In NA74; induces defects in DNA repair.">
    <original>A</original>
    <variation>T</variation>
    <location>
        <position position="151"/>
    </location>
</feature>
<feature type="helix" evidence="7">
    <location>
        <begin position="450"/>
        <end position="491"/>
    </location>
</feature>
<feature type="turn" evidence="7">
    <location>
        <begin position="492"/>
        <end position="498"/>
    </location>
</feature>
<feature type="helix" evidence="7">
    <location>
        <begin position="502"/>
        <end position="511"/>
    </location>
</feature>
<feature type="helix" evidence="7">
    <location>
        <begin position="512"/>
        <end position="514"/>
    </location>
</feature>
<feature type="turn" evidence="7">
    <location>
        <begin position="515"/>
        <end position="522"/>
    </location>
</feature>
<feature type="helix" evidence="7">
    <location>
        <begin position="524"/>
        <end position="528"/>
    </location>
</feature>
<feature type="helix" evidence="7">
    <location>
        <begin position="532"/>
        <end position="539"/>
    </location>
</feature>
<feature type="helix" evidence="7">
    <location>
        <begin position="553"/>
        <end position="556"/>
    </location>
</feature>
<feature type="strand" evidence="7">
    <location>
        <begin position="557"/>
        <end position="560"/>
    </location>
</feature>
<feature type="helix" evidence="7">
    <location>
        <begin position="562"/>
        <end position="564"/>
    </location>
</feature>
<feature type="helix" evidence="7">
    <location>
        <begin position="565"/>
        <end position="571"/>
    </location>
</feature>
<feature type="helix" evidence="7">
    <location>
        <begin position="575"/>
        <end position="577"/>
    </location>
</feature>
<feature type="strand" evidence="7">
    <location>
        <begin position="578"/>
        <end position="583"/>
    </location>
</feature>
<feature type="helix" evidence="7">
    <location>
        <begin position="584"/>
        <end position="597"/>
    </location>
</feature>
<feature type="strand" evidence="7">
    <location>
        <begin position="603"/>
        <end position="605"/>
    </location>
</feature>
<feature type="helix" evidence="7">
    <location>
        <begin position="614"/>
        <end position="616"/>
    </location>
</feature>
<feature type="helix" evidence="7">
    <location>
        <begin position="626"/>
        <end position="628"/>
    </location>
</feature>
<feature type="strand" evidence="7">
    <location>
        <begin position="629"/>
        <end position="632"/>
    </location>
</feature>
<feature type="helix" evidence="7">
    <location>
        <begin position="634"/>
        <end position="644"/>
    </location>
</feature>
<feature type="helix" evidence="7">
    <location>
        <begin position="646"/>
        <end position="648"/>
    </location>
</feature>
<feature type="strand" evidence="7">
    <location>
        <begin position="649"/>
        <end position="651"/>
    </location>
</feature>
<feature type="helix" evidence="7">
    <location>
        <begin position="655"/>
        <end position="663"/>
    </location>
</feature>
<feature type="strand" evidence="7">
    <location>
        <begin position="671"/>
        <end position="675"/>
    </location>
</feature>
<feature type="strand" evidence="7">
    <location>
        <begin position="677"/>
        <end position="679"/>
    </location>
</feature>
<feature type="strand" evidence="7">
    <location>
        <begin position="683"/>
        <end position="686"/>
    </location>
</feature>
<feature type="strand" evidence="7">
    <location>
        <begin position="693"/>
        <end position="698"/>
    </location>
</feature>
<feature type="strand" evidence="7">
    <location>
        <begin position="707"/>
        <end position="709"/>
    </location>
</feature>
<keyword id="KW-0002">3D-structure</keyword>
<keyword id="KW-0067">ATP-binding</keyword>
<keyword id="KW-0158">Chromosome</keyword>
<keyword id="KW-0175">Coiled coil</keyword>
<keyword id="KW-0903">Direct protein sequencing</keyword>
<keyword id="KW-0227">DNA damage</keyword>
<keyword id="KW-0233">DNA recombination</keyword>
<keyword id="KW-0234">DNA repair</keyword>
<keyword id="KW-0469">Meiosis</keyword>
<keyword id="KW-0547">Nucleotide-binding</keyword>
<keyword id="KW-0539">Nucleus</keyword>
<keyword id="KW-1185">Reference proteome</keyword>
<keyword id="KW-0832">Ubl conjugation</keyword>
<dbReference type="EMBL" id="X80929">
    <property type="protein sequence ID" value="CAA56900.1"/>
    <property type="molecule type" value="Genomic_DNA"/>
</dbReference>
<dbReference type="EMBL" id="CU329672">
    <property type="protein sequence ID" value="CAA21961.1"/>
    <property type="molecule type" value="Genomic_DNA"/>
</dbReference>
<dbReference type="PIR" id="T41457">
    <property type="entry name" value="T41457"/>
</dbReference>
<dbReference type="RefSeq" id="NP_587906.1">
    <property type="nucleotide sequence ID" value="NM_001022898.2"/>
</dbReference>
<dbReference type="PDB" id="5MG8">
    <property type="method" value="X-ray"/>
    <property type="resolution" value="2.75 A"/>
    <property type="chains" value="B/D=448-720"/>
</dbReference>
<dbReference type="PDBsum" id="5MG8"/>
<dbReference type="SMR" id="P53692"/>
<dbReference type="BioGRID" id="275593">
    <property type="interactions" value="35"/>
</dbReference>
<dbReference type="ComplexPortal" id="CPX-25736">
    <property type="entry name" value="SMC5-SMC6 SUMO ligase complex"/>
</dbReference>
<dbReference type="FunCoup" id="P53692">
    <property type="interactions" value="605"/>
</dbReference>
<dbReference type="IntAct" id="P53692">
    <property type="interactions" value="8"/>
</dbReference>
<dbReference type="STRING" id="284812.P53692"/>
<dbReference type="iPTMnet" id="P53692"/>
<dbReference type="PaxDb" id="4896-SPCC5E4.06.1"/>
<dbReference type="EnsemblFungi" id="SPCC5E4.06.1">
    <property type="protein sequence ID" value="SPCC5E4.06.1:pep"/>
    <property type="gene ID" value="SPCC5E4.06"/>
</dbReference>
<dbReference type="GeneID" id="2539020"/>
<dbReference type="KEGG" id="spo:2539020"/>
<dbReference type="PomBase" id="SPCC5E4.06">
    <property type="gene designation" value="smc6"/>
</dbReference>
<dbReference type="VEuPathDB" id="FungiDB:SPCC5E4.06"/>
<dbReference type="eggNOG" id="KOG0250">
    <property type="taxonomic scope" value="Eukaryota"/>
</dbReference>
<dbReference type="HOGENOM" id="CLU_009063_0_0_1"/>
<dbReference type="InParanoid" id="P53692"/>
<dbReference type="OMA" id="FMCHRSL"/>
<dbReference type="PhylomeDB" id="P53692"/>
<dbReference type="Reactome" id="R-SPO-3108214">
    <property type="pathway name" value="SUMOylation of DNA damage response and repair proteins"/>
</dbReference>
<dbReference type="PRO" id="PR:P53692"/>
<dbReference type="Proteomes" id="UP000002485">
    <property type="component" value="Chromosome III"/>
</dbReference>
<dbReference type="GO" id="GO:0005634">
    <property type="term" value="C:nucleus"/>
    <property type="evidence" value="ECO:0007005"/>
    <property type="project" value="PomBase"/>
</dbReference>
<dbReference type="GO" id="GO:0035861">
    <property type="term" value="C:site of double-strand break"/>
    <property type="evidence" value="ECO:0000318"/>
    <property type="project" value="GO_Central"/>
</dbReference>
<dbReference type="GO" id="GO:0030915">
    <property type="term" value="C:Smc5-Smc6 complex"/>
    <property type="evidence" value="ECO:0000314"/>
    <property type="project" value="PomBase"/>
</dbReference>
<dbReference type="GO" id="GO:0005524">
    <property type="term" value="F:ATP binding"/>
    <property type="evidence" value="ECO:0007669"/>
    <property type="project" value="UniProtKB-KW"/>
</dbReference>
<dbReference type="GO" id="GO:0016887">
    <property type="term" value="F:ATP hydrolysis activity"/>
    <property type="evidence" value="ECO:0000305"/>
    <property type="project" value="PomBase"/>
</dbReference>
<dbReference type="GO" id="GO:0008094">
    <property type="term" value="F:ATP-dependent activity, acting on DNA"/>
    <property type="evidence" value="ECO:0000314"/>
    <property type="project" value="PomBase"/>
</dbReference>
<dbReference type="GO" id="GO:0003684">
    <property type="term" value="F:damaged DNA binding"/>
    <property type="evidence" value="ECO:0000318"/>
    <property type="project" value="GO_Central"/>
</dbReference>
<dbReference type="GO" id="GO:0003697">
    <property type="term" value="F:single-stranded DNA binding"/>
    <property type="evidence" value="ECO:0000314"/>
    <property type="project" value="PomBase"/>
</dbReference>
<dbReference type="GO" id="GO:0000724">
    <property type="term" value="P:double-strand break repair via homologous recombination"/>
    <property type="evidence" value="ECO:0000316"/>
    <property type="project" value="PomBase"/>
</dbReference>
<dbReference type="GO" id="GO:0051321">
    <property type="term" value="P:meiotic cell cycle"/>
    <property type="evidence" value="ECO:0007669"/>
    <property type="project" value="UniProtKB-KW"/>
</dbReference>
<dbReference type="FunFam" id="3.40.50.300:FF:003232">
    <property type="entry name" value="Structural maintenance of chromosomes 6, gene 1"/>
    <property type="match status" value="1"/>
</dbReference>
<dbReference type="Gene3D" id="1.10.287.1490">
    <property type="match status" value="1"/>
</dbReference>
<dbReference type="Gene3D" id="3.40.50.300">
    <property type="entry name" value="P-loop containing nucleotide triphosphate hydrolases"/>
    <property type="match status" value="2"/>
</dbReference>
<dbReference type="InterPro" id="IPR027417">
    <property type="entry name" value="P-loop_NTPase"/>
</dbReference>
<dbReference type="InterPro" id="IPR003395">
    <property type="entry name" value="RecF/RecN/SMC_N"/>
</dbReference>
<dbReference type="PANTHER" id="PTHR19306">
    <property type="entry name" value="STRUCTURAL MAINTENANCE OF CHROMOSOMES 5,6 SMC5, SMC6"/>
    <property type="match status" value="1"/>
</dbReference>
<dbReference type="PANTHER" id="PTHR19306:SF6">
    <property type="entry name" value="STRUCTURAL MAINTENANCE OF CHROMOSOMES PROTEIN 6"/>
    <property type="match status" value="1"/>
</dbReference>
<dbReference type="Pfam" id="PF02463">
    <property type="entry name" value="SMC_N"/>
    <property type="match status" value="1"/>
</dbReference>
<dbReference type="SUPFAM" id="SSF52540">
    <property type="entry name" value="P-loop containing nucleoside triphosphate hydrolases"/>
    <property type="match status" value="1"/>
</dbReference>
<accession>P53692</accession>
<reference key="1">
    <citation type="journal article" date="1995" name="Mol. Cell. Biol.">
        <title>The rad18 gene of Schizosaccharomyces pombe defines a new subgroup of the SMC superfamily involved in DNA repair.</title>
        <authorList>
            <person name="Lehmann A.R."/>
            <person name="Walicka M."/>
            <person name="Griffiths D.J.F."/>
            <person name="Murray J.M."/>
            <person name="Watts F.Z."/>
            <person name="McCready S."/>
            <person name="Carr A.M."/>
        </authorList>
    </citation>
    <scope>NUCLEOTIDE SEQUENCE [GENOMIC DNA]</scope>
</reference>
<reference key="2">
    <citation type="journal article" date="2002" name="Nature">
        <title>The genome sequence of Schizosaccharomyces pombe.</title>
        <authorList>
            <person name="Wood V."/>
            <person name="Gwilliam R."/>
            <person name="Rajandream M.A."/>
            <person name="Lyne M.H."/>
            <person name="Lyne R."/>
            <person name="Stewart A."/>
            <person name="Sgouros J.G."/>
            <person name="Peat N."/>
            <person name="Hayles J."/>
            <person name="Baker S.G."/>
            <person name="Basham D."/>
            <person name="Bowman S."/>
            <person name="Brooks K."/>
            <person name="Brown D."/>
            <person name="Brown S."/>
            <person name="Chillingworth T."/>
            <person name="Churcher C.M."/>
            <person name="Collins M."/>
            <person name="Connor R."/>
            <person name="Cronin A."/>
            <person name="Davis P."/>
            <person name="Feltwell T."/>
            <person name="Fraser A."/>
            <person name="Gentles S."/>
            <person name="Goble A."/>
            <person name="Hamlin N."/>
            <person name="Harris D.E."/>
            <person name="Hidalgo J."/>
            <person name="Hodgson G."/>
            <person name="Holroyd S."/>
            <person name="Hornsby T."/>
            <person name="Howarth S."/>
            <person name="Huckle E.J."/>
            <person name="Hunt S."/>
            <person name="Jagels K."/>
            <person name="James K.D."/>
            <person name="Jones L."/>
            <person name="Jones M."/>
            <person name="Leather S."/>
            <person name="McDonald S."/>
            <person name="McLean J."/>
            <person name="Mooney P."/>
            <person name="Moule S."/>
            <person name="Mungall K.L."/>
            <person name="Murphy L.D."/>
            <person name="Niblett D."/>
            <person name="Odell C."/>
            <person name="Oliver K."/>
            <person name="O'Neil S."/>
            <person name="Pearson D."/>
            <person name="Quail M.A."/>
            <person name="Rabbinowitsch E."/>
            <person name="Rutherford K.M."/>
            <person name="Rutter S."/>
            <person name="Saunders D."/>
            <person name="Seeger K."/>
            <person name="Sharp S."/>
            <person name="Skelton J."/>
            <person name="Simmonds M.N."/>
            <person name="Squares R."/>
            <person name="Squares S."/>
            <person name="Stevens K."/>
            <person name="Taylor K."/>
            <person name="Taylor R.G."/>
            <person name="Tivey A."/>
            <person name="Walsh S.V."/>
            <person name="Warren T."/>
            <person name="Whitehead S."/>
            <person name="Woodward J.R."/>
            <person name="Volckaert G."/>
            <person name="Aert R."/>
            <person name="Robben J."/>
            <person name="Grymonprez B."/>
            <person name="Weltjens I."/>
            <person name="Vanstreels E."/>
            <person name="Rieger M."/>
            <person name="Schaefer M."/>
            <person name="Mueller-Auer S."/>
            <person name="Gabel C."/>
            <person name="Fuchs M."/>
            <person name="Duesterhoeft A."/>
            <person name="Fritzc C."/>
            <person name="Holzer E."/>
            <person name="Moestl D."/>
            <person name="Hilbert H."/>
            <person name="Borzym K."/>
            <person name="Langer I."/>
            <person name="Beck A."/>
            <person name="Lehrach H."/>
            <person name="Reinhardt R."/>
            <person name="Pohl T.M."/>
            <person name="Eger P."/>
            <person name="Zimmermann W."/>
            <person name="Wedler H."/>
            <person name="Wambutt R."/>
            <person name="Purnelle B."/>
            <person name="Goffeau A."/>
            <person name="Cadieu E."/>
            <person name="Dreano S."/>
            <person name="Gloux S."/>
            <person name="Lelaure V."/>
            <person name="Mottier S."/>
            <person name="Galibert F."/>
            <person name="Aves S.J."/>
            <person name="Xiang Z."/>
            <person name="Hunt C."/>
            <person name="Moore K."/>
            <person name="Hurst S.M."/>
            <person name="Lucas M."/>
            <person name="Rochet M."/>
            <person name="Gaillardin C."/>
            <person name="Tallada V.A."/>
            <person name="Garzon A."/>
            <person name="Thode G."/>
            <person name="Daga R.R."/>
            <person name="Cruzado L."/>
            <person name="Jimenez J."/>
            <person name="Sanchez M."/>
            <person name="del Rey F."/>
            <person name="Benito J."/>
            <person name="Dominguez A."/>
            <person name="Revuelta J.L."/>
            <person name="Moreno S."/>
            <person name="Armstrong J."/>
            <person name="Forsburg S.L."/>
            <person name="Cerutti L."/>
            <person name="Lowe T."/>
            <person name="McCombie W.R."/>
            <person name="Paulsen I."/>
            <person name="Potashkin J."/>
            <person name="Shpakovski G.V."/>
            <person name="Ussery D."/>
            <person name="Barrell B.G."/>
            <person name="Nurse P."/>
        </authorList>
    </citation>
    <scope>NUCLEOTIDE SEQUENCE [LARGE SCALE GENOMIC DNA]</scope>
    <source>
        <strain>972 / ATCC 24843</strain>
    </source>
</reference>
<reference key="3">
    <citation type="journal article" date="2004" name="Mol. Biol. Cell">
        <title>Nse1, Nse2, and a novel subunit of the Smc5-Smc6 complex, Nse3, play a crucial role in meiosis.</title>
        <authorList>
            <person name="Pebernard S."/>
            <person name="McDonald W.H."/>
            <person name="Pavlova Y."/>
            <person name="Yates J.R. III"/>
            <person name="Boddy M.N."/>
        </authorList>
    </citation>
    <scope>PARTIAL PROTEIN SEQUENCE</scope>
</reference>
<reference key="4">
    <citation type="journal article" date="2006" name="Mol. Cell. Biol.">
        <title>The Nse5-Nse6 dimer mediates DNA repair roles of the Smc5-Smc6 complex.</title>
        <authorList>
            <person name="Pebernard S."/>
            <person name="Wohlschlegel J."/>
            <person name="McDonald W.H."/>
            <person name="Yates J.R. III"/>
            <person name="Boddy M.N."/>
        </authorList>
    </citation>
    <scope>PARTIAL PROTEIN SEQUENCE</scope>
    <scope>IDENTIFICATION BY MASS SPECTROMETRY</scope>
</reference>
<reference key="5">
    <citation type="journal article" date="1999" name="Mol. Biol. Cell">
        <title>Rad18 is required for DNA repair and checkpoint responses in fission yeast.</title>
        <authorList>
            <person name="Verkade H.M."/>
            <person name="Bugg S.J."/>
            <person name="Lindsay H.D."/>
            <person name="Carr A.M."/>
            <person name="O'Connell M.J."/>
        </authorList>
    </citation>
    <scope>FUNCTION</scope>
    <scope>SUBCELLULAR LOCATION</scope>
    <scope>MUTANT NA74</scope>
</reference>
<reference key="6">
    <citation type="journal article" date="2003" name="J. Biol. Chem.">
        <title>Novel essential DNA repair proteins Nse1 and Nse2 are subunits of the fission yeast Smc5-Smc6 complex.</title>
        <authorList>
            <person name="McDonald W.H."/>
            <person name="Pavlova Y."/>
            <person name="Yates J.R. III"/>
            <person name="Boddy M.N."/>
        </authorList>
    </citation>
    <scope>INTERACTION WITH NSE1 AND NSE2</scope>
</reference>
<reference key="7">
    <citation type="journal article" date="2004" name="Mol. Cell. Biol.">
        <title>Rad62 protein functionally and physically associates with the smc5/smc6 protein complex and is required for chromosome integrity and recombination repair in fission yeast.</title>
        <authorList>
            <person name="Morikawa H."/>
            <person name="Morishita T."/>
            <person name="Kawane S."/>
            <person name="Iwasaki H."/>
            <person name="Carr A.M."/>
            <person name="Shinagawa H."/>
        </authorList>
    </citation>
    <scope>INTERACTION WITH NSE4</scope>
</reference>
<reference key="8">
    <citation type="journal article" date="2005" name="Mol. Cell. Biol.">
        <title>Nse2, a component of the Smc5-6 complex, is a SUMO ligase required for the response to DNA damage.</title>
        <authorList>
            <person name="Andrews E.A."/>
            <person name="Palecek J."/>
            <person name="Sergeant J."/>
            <person name="Taylor E."/>
            <person name="Lehmann A.R."/>
            <person name="Watts F.Z."/>
        </authorList>
    </citation>
    <scope>INTERACTION WITH NSE2</scope>
    <scope>SUMOYLATION BY NSE2</scope>
</reference>
<reference key="9">
    <citation type="journal article" date="2006" name="Nat. Biotechnol.">
        <title>ORFeome cloning and global analysis of protein localization in the fission yeast Schizosaccharomyces pombe.</title>
        <authorList>
            <person name="Matsuyama A."/>
            <person name="Arai R."/>
            <person name="Yashiroda Y."/>
            <person name="Shirai A."/>
            <person name="Kamata A."/>
            <person name="Sekido S."/>
            <person name="Kobayashi Y."/>
            <person name="Hashimoto A."/>
            <person name="Hamamoto M."/>
            <person name="Hiraoka Y."/>
            <person name="Horinouchi S."/>
            <person name="Yoshida M."/>
        </authorList>
    </citation>
    <scope>SUBCELLULAR LOCATION [LARGE SCALE ANALYSIS]</scope>
</reference>
<sequence>MTTELTNVSLEEAITEKTSENRRKRDSDVLQTEEVDLSNVKRIRASRNQDNRPERQSRLQRSSSLIEQVRGNEDGENDVLNQTRETNSNFDNRVGVIECIHLVNFMCHDSLKINFGPRINFVIGHNGSGKSAILTGLTICLGAKASNTNRAPNMKSLVKQGKNYARISVTISNRGFEAYQPEIYGKSITIERTIRREGSSEYRLRSFNGTVISTKRDELDNICDHMGLQIDNPMNILTQDTARQFLGNSSPKEKYQLFMKGIQLKQLEENYSLIEQSLINTKNVLGNKKTGVSYLAKKEEEYKLLWEQSRETENLHNLLEQKKGEMVWAQVVEVEKELLLAEKEFQHAEVKLSEAKENLESIVTNQSDIDGKISSKEEVIGRAKGETDTTKSKFEDIVKTFDGYRSEMNDVDIQKRDIQNSINAAKSCLDVYREQLNTERARENNLGGSQIEKRANESNNLQREIADLSEQIVELESKRNDLHSALLEMGGNLTSLLTKKDSIANKISDQSEHLKVLEDVQRDKVSAFGKNMPQLLKLITRETRFQHPPKGPMGKYMTVKEQKWHLIIERILGNVINGFIVRSHHDQLILKELMRQSNCHATVVVGKYDPFDYSSGEPDSQYPTVLKIIKFDDDEVLHTLINHLGIEKMLLIEDRREAEAYMKRGIANVTQCYALDPRNRGYGFRIVSTQRSSGISKVTPWNRPPRIGFSSSTSIEAEKKILDDLKKQYNFASNQLNEAKIEQAKFKRDEQLLVEKIEGIKKRILLKRREVNSLESQELSVLDTEKIQTLERRISETEKELESYAGQLQDAKNEEHRIRDNQRPVIEEIRIYREKIQTETQRLSSLQTELSRLRDEKRNSEVDIERHRQTVESCTNILREKEAKKVQCAQVVADYTAKANTRCERVPVQLSPAELDNEIERLQMQIAEWRNRTGVSVEQAAEDYLNAKEKHDQAKVLVARLTQLLQALEETLRRRNEMWTKFRKLITLRTKELFELYLSQRNFTGKLVIKHQEEFLEPRVYPANRNLATAHNRHEKSKVSVQGLSGGEKSFATICMLLSIWEAMSCPLRCLDEFDVFMDAVNRLVSIKMMVDSAKDSSDKQFIFITPQDMGQIGLDKDVVVFRLSDPVVSSSALPPSTAP</sequence>
<comment type="function">
    <text evidence="4">Acts in a DNA repair pathway for removal of UV-induced DNA damage that is distinct from classical nucleotide excision repair and in repair of ionizing radiation damage. Functions in homologous recombination repair of DNA double strand breaks and in recovery of stalled replication forks. Plays a critical role in meiosis.</text>
</comment>
<comment type="subunit">
    <text>Two subcomplexes smc5-smc6-nse2 and nse1-nse3-nse4 exist. These subcomplexes are then brought together via a number of interactions, forming the Smc5-Smc6 complex.</text>
</comment>
<comment type="interaction">
    <interactant intactId="EBI-603745">
        <id>P53692</id>
    </interactant>
    <interactant intactId="EBI-605440">
        <id>Q53EK2</id>
        <label>nse1</label>
    </interactant>
    <organismsDiffer>false</organismsDiffer>
    <experiments>4</experiments>
</comment>
<comment type="interaction">
    <interactant intactId="EBI-603745">
        <id>P53692</id>
    </interactant>
    <interactant intactId="EBI-605449">
        <id>Q4PIR3</id>
        <label>nse2</label>
    </interactant>
    <organismsDiffer>false</organismsDiffer>
    <experiments>3</experiments>
</comment>
<comment type="interaction">
    <interactant intactId="EBI-603745">
        <id>P53692</id>
    </interactant>
    <interactant intactId="EBI-605466">
        <id>Q9Y7U4</id>
        <label>nse3</label>
    </interactant>
    <organismsDiffer>false</organismsDiffer>
    <experiments>5</experiments>
</comment>
<comment type="interaction">
    <interactant intactId="EBI-603745">
        <id>P53692</id>
    </interactant>
    <interactant intactId="EBI-605484">
        <id>Q6BDR8</id>
        <label>nse4</label>
    </interactant>
    <organismsDiffer>false</organismsDiffer>
    <experiments>4</experiments>
</comment>
<comment type="interaction">
    <interactant intactId="EBI-603745">
        <id>P53692</id>
    </interactant>
    <interactant intactId="EBI-1150352">
        <id>O94668</id>
        <label>nse5</label>
    </interactant>
    <organismsDiffer>false</organismsDiffer>
    <experiments>2</experiments>
</comment>
<comment type="interaction">
    <interactant intactId="EBI-603745">
        <id>P53692</id>
    </interactant>
    <interactant intactId="EBI-1150368">
        <id>O13688</id>
        <label>nse6</label>
    </interactant>
    <organismsDiffer>false</organismsDiffer>
    <experiments>4</experiments>
</comment>
<comment type="interaction">
    <interactant intactId="EBI-603745">
        <id>P53692</id>
    </interactant>
    <interactant intactId="EBI-603756">
        <id>O13710</id>
        <label>smc5</label>
    </interactant>
    <organismsDiffer>false</organismsDiffer>
    <experiments>10</experiments>
</comment>
<comment type="subcellular location">
    <subcellularLocation>
        <location>Nucleus</location>
    </subcellularLocation>
    <subcellularLocation>
        <location>Chromosome</location>
    </subcellularLocation>
</comment>
<comment type="domain">
    <text evidence="1">The flexible hinge domain, which separates the large intramolecular coiled coil regions, allows the heterotypic interaction with the corresponding domain of smc5, forming a V-shaped heterodimer.</text>
</comment>
<comment type="PTM">
    <text evidence="5">Sumoylated by nse2.</text>
</comment>
<comment type="similarity">
    <text evidence="6">Belongs to the SMC family. SMC6 subfamily.</text>
</comment>
<gene>
    <name type="primary">smc6</name>
    <name type="synonym">rad18</name>
    <name type="ORF">SPCC5E4.06</name>
</gene>